<organism>
    <name type="scientific">Pepper mild mottle virus (strain Spain)</name>
    <name type="common">PMMV-S</name>
    <dbReference type="NCBI Taxonomy" id="31745"/>
    <lineage>
        <taxon>Viruses</taxon>
        <taxon>Riboviria</taxon>
        <taxon>Orthornavirae</taxon>
        <taxon>Kitrinoviricota</taxon>
        <taxon>Alsuviricetes</taxon>
        <taxon>Martellivirales</taxon>
        <taxon>Virgaviridae</taxon>
        <taxon>Tobamovirus</taxon>
        <taxon>Pepper mild mottle virus</taxon>
    </lineage>
</organism>
<reference key="1">
    <citation type="journal article" date="1991" name="J. Gen. Virol.">
        <title>Nucleotide sequence of the genomic RNA of pepper mild mottle virus, a resistance-breaking tobamovirus in pepper.</title>
        <authorList>
            <person name="Alonso E."/>
            <person name="Garcia-Luque I."/>
            <person name="de la Cruz A."/>
            <person name="Wicke B."/>
            <person name="Avila-Rincon M.J."/>
            <person name="Serra M.T."/>
            <person name="Castresana C."/>
            <person name="Diaz-Ruiz J.R."/>
        </authorList>
    </citation>
    <scope>NUCLEOTIDE SEQUENCE [GENOMIC RNA]</scope>
</reference>
<feature type="chain" id="PRO_0000041182" description="Replicase large subunit">
    <location>
        <begin position="1"/>
        <end position="1612"/>
    </location>
</feature>
<feature type="chain" id="PRO_0000041183" description="Replicase small subunit">
    <location>
        <begin position="1"/>
        <end position="1117"/>
    </location>
</feature>
<feature type="domain" description="Alphavirus-like MT" evidence="4">
    <location>
        <begin position="72"/>
        <end position="280"/>
    </location>
</feature>
<feature type="domain" description="(+)RNA virus helicase ATP-binding">
    <location>
        <begin position="803"/>
        <end position="964"/>
    </location>
</feature>
<feature type="domain" description="(+)RNA virus helicase C-terminal">
    <location>
        <begin position="965"/>
        <end position="1117"/>
    </location>
</feature>
<feature type="domain" description="RdRp catalytic" evidence="3">
    <location>
        <begin position="1380"/>
        <end position="1493"/>
    </location>
</feature>
<feature type="region of interest" description="Methyltransferase">
    <location>
        <begin position="52"/>
        <end position="466"/>
    </location>
</feature>
<feature type="region of interest" description="Helicase">
    <location>
        <begin position="831"/>
        <end position="1086"/>
    </location>
</feature>
<feature type="binding site" evidence="2">
    <location>
        <begin position="835"/>
        <end position="842"/>
    </location>
    <ligand>
        <name>ATP</name>
        <dbReference type="ChEBI" id="CHEBI:30616"/>
    </ligand>
</feature>
<accession>P29098</accession>
<accession>Q84924</accession>
<evidence type="ECO:0000250" key="1"/>
<evidence type="ECO:0000255" key="2"/>
<evidence type="ECO:0000255" key="3">
    <source>
        <dbReference type="PROSITE-ProRule" id="PRU00539"/>
    </source>
</evidence>
<evidence type="ECO:0000255" key="4">
    <source>
        <dbReference type="PROSITE-ProRule" id="PRU01079"/>
    </source>
</evidence>
<evidence type="ECO:0000305" key="5"/>
<keyword id="KW-0067">ATP-binding</keyword>
<keyword id="KW-0347">Helicase</keyword>
<keyword id="KW-0945">Host-virus interaction</keyword>
<keyword id="KW-0378">Hydrolase</keyword>
<keyword id="KW-1090">Inhibition of host innate immune response by virus</keyword>
<keyword id="KW-0547">Nucleotide-binding</keyword>
<keyword id="KW-0548">Nucleotidyltransferase</keyword>
<keyword id="KW-1159">RNA suppression of termination</keyword>
<keyword id="KW-0696">RNA-directed RNA polymerase</keyword>
<keyword id="KW-0941">Suppressor of RNA silencing</keyword>
<keyword id="KW-0808">Transferase</keyword>
<keyword id="KW-0899">Viral immunoevasion</keyword>
<keyword id="KW-0693">Viral RNA replication</keyword>
<proteinExistence type="inferred from homology"/>
<protein>
    <recommendedName>
        <fullName>Replicase large subunit</fullName>
        <ecNumber>2.1.1.-</ecNumber>
        <ecNumber>2.7.7.-</ecNumber>
        <ecNumber>2.7.7.48</ecNumber>
        <ecNumber>3.6.4.13</ecNumber>
    </recommendedName>
    <alternativeName>
        <fullName>183 kDa protein</fullName>
    </alternativeName>
    <alternativeName>
        <fullName>RNA-directed RNA polymerase</fullName>
    </alternativeName>
    <component>
        <recommendedName>
            <fullName>Replicase small subunit</fullName>
            <ecNumber>2.1.1.-</ecNumber>
            <ecNumber>2.7.7.-</ecNumber>
            <ecNumber>3.6.4.13</ecNumber>
        </recommendedName>
        <alternativeName>
            <fullName>126 kDa protein</fullName>
        </alternativeName>
        <alternativeName>
            <fullName>Methyltransferase/RNA helicase</fullName>
            <shortName>MT/HEL</shortName>
        </alternativeName>
    </component>
</protein>
<sequence>MAYTQQATNAALASTLRGNNPLVNDLANRRLYESAVEQCNAHDRRPKVNFLRSISEEQTLIATKAYPEFQITFYNTQNAVHSLAGGLRSLELEYLMMQIPYGSTTYDIGGNFAAHMFKGRDYVHCCMPNMDLRDVMRHNAQKDSIELYLSKLAQKKKVIPPYQKPCFDKYTDDPQSVVCSKPFQHCEGVSHCTDKVYAVALHSLYDIPADEFGAALLRRNVHVCYAAFHFSENLLLEDSYVSLDDIGAFFSREGDMLNFSFVAESTLNYTHSYSNVLKYVCKTYFPASSREVYMKEFLVTRVNTWFCKFSRLDTFVLYRGVYHRGVDKEQFYSAMEDAWHYKKTLAMMNSERILLEDSSSVNYWFPKMKDMVIVPLFDVSLQNEGKRLARKEVMVSKDFVYTVLNHIRTYQSKALTYANVLSFVESIRSRVIINGVTARSEWDVDKALLQSLSMTFFLQTKLAMLKDDLVVQKFQVHSKSLTEYVWDEITAAFHNCFPTIKERLINKKLITVSEKALEIKVPDLYVTFHDRLVKEYKSSVEMPVLDVKKSLEEAEVMYNALSEISILKDSDKFDVDVFSRMCNTLGVDPLVAAKVMVAVVSNESGLTLTFERPTEANVALALQPTITSKEEGSLKIVSSDVGESSIKEVVRKSEISMLGLTGNTVSDEFQRSTEIESLQQFHMVSTETIIRKQMHAMVYTGPLKVQQCKNYLDSLVASLSAAVSNLKKIIKDTAAIDLETKEKFGVYDVCLKKWLVKPLSKGHAWGVVMDSDYKCFVALLTYDGENIVCGETWRRVAVSSESLVYSDMGKIRAIRSVLKDGEPHISSAKVTLVDGVPGCGKTKEILSRVNFDEDLVLVPGKQAAEMIRRRANSSGLIVATKENVRTVDSFLMNYGRGPCQYKRLFLDEGLMLHPGCVNFLVGMSLCSEAFVYGDTQQIPYINRVATFPYPKHLSQLEVDAVETRRTTLRCPADITFFLNQKYEGQVMCTSSVTRSVSHEVIQGAAVMNPVSKPLKGKVITFTQSDKSLLLSRGYEDVHTVHEVQGETFEDVSLVRLTPTPVGIISKQSPHLLVSLSRHTRSIKYYTVVLDAVVSVLRDLECVSSYLLDMYKVDVSTQXQLQIESVYKGVNLFVAAPKTGDVSDMQYYYDKCLPGNSTILNEYDAVTMQIRENSLNVKDCVLDMSKSVPLPRESETTLKPVIRTAAEKPRKPGLLENLVAMIKRNFNSPELVGVVDIEDTASLVVDKFFDAYLIKEKKKPKNIPLLSRASLERWIEKQEKSTIGQLADFDFIDLPAVDQYRHMIKQQPKQRLDLSIQTEYPALQTIVYHSKKINALFGPVFSELTRQLLETIDSSRFMFYTRKTPTQIEEFFSDLDSNVPMDILELDISKYDKSQNEFHCAVEYEIWKRLGLDDFLAEVWKHGHRKTTLKDYTAGIKTCLWYQRKSGDVTTFIGNTIIIAACLSSMLPMERLIKGAFCGDDSILYFPKGTDFPDIQQGANLLWNFEAKLFRKRYGYFCGRYIIHHDRGCIVYYDPLKLISKLGAKHIKNREHLEEFRTSLCDVAGSLNNCAYYTHLNDAVGEVIKTAPLGSFVYRALVKYLCDKRLFQTLFLE</sequence>
<comment type="function">
    <molecule>Replicase large subunit</molecule>
    <text>Is an RNA-dependent RNA polymerase active in viral RNA replication.</text>
</comment>
<comment type="function">
    <molecule>Replicase small subunit</molecule>
    <text evidence="1 5">Is a methyltransferase active in RNA capping and an RNA helicase. Methyltransferase displays a cytoplasmic capping enzyme activity. This function is necessary since all viral RNAs are synthesized in the cytoplasm, and host capping enzymes are restricted to the nucleus. Helicase region probably exhibits NTPase and RNA unwinding activities (Potential). It also acts as a suppressor of RNA-mediated gene silencing, also known as post-transcriptional gene silencing (PTGS), a mechanism of plant viral defense that limits the accumulation of viral RNAs. May mediate silencing suppression through either inhibition of HEN1-mediated siRNA or siRNA demethylation (By similarity).</text>
</comment>
<comment type="catalytic activity">
    <reaction evidence="3">
        <text>RNA(n) + a ribonucleoside 5'-triphosphate = RNA(n+1) + diphosphate</text>
        <dbReference type="Rhea" id="RHEA:21248"/>
        <dbReference type="Rhea" id="RHEA-COMP:14527"/>
        <dbReference type="Rhea" id="RHEA-COMP:17342"/>
        <dbReference type="ChEBI" id="CHEBI:33019"/>
        <dbReference type="ChEBI" id="CHEBI:61557"/>
        <dbReference type="ChEBI" id="CHEBI:140395"/>
        <dbReference type="EC" id="2.7.7.48"/>
    </reaction>
</comment>
<comment type="catalytic activity">
    <reaction>
        <text>ATP + H2O = ADP + phosphate + H(+)</text>
        <dbReference type="Rhea" id="RHEA:13065"/>
        <dbReference type="ChEBI" id="CHEBI:15377"/>
        <dbReference type="ChEBI" id="CHEBI:15378"/>
        <dbReference type="ChEBI" id="CHEBI:30616"/>
        <dbReference type="ChEBI" id="CHEBI:43474"/>
        <dbReference type="ChEBI" id="CHEBI:456216"/>
        <dbReference type="EC" id="3.6.4.13"/>
    </reaction>
</comment>
<comment type="subunit">
    <text evidence="1">Heterodimer of a large and a small subunit.</text>
</comment>
<comment type="miscellaneous">
    <text>This protein is translated as a fusion protein by episodic readthrough of a termination codon. When readthrough of the terminator codon TGA occurs between the codons for Gln-1117 and Gln-1119, this results in the addition of the RdRp region to the replicase.</text>
</comment>
<comment type="similarity">
    <text evidence="5">Belongs to the ssRNA positive-strand viruses RNA-directed RNA polymerase family.</text>
</comment>
<dbReference type="EC" id="2.1.1.-"/>
<dbReference type="EC" id="2.7.7.-"/>
<dbReference type="EC" id="2.7.7.48"/>
<dbReference type="EC" id="3.6.4.13"/>
<dbReference type="EMBL" id="M81413">
    <property type="protein sequence ID" value="AAB02334.1"/>
    <property type="molecule type" value="Genomic_RNA"/>
</dbReference>
<dbReference type="EMBL" id="M81413">
    <property type="protein sequence ID" value="AAB02335.1"/>
    <property type="molecule type" value="Genomic_RNA"/>
</dbReference>
<dbReference type="PIR" id="JQ1312">
    <property type="entry name" value="WMTMPV"/>
</dbReference>
<dbReference type="RefSeq" id="NP_619740.1">
    <property type="nucleotide sequence ID" value="NC_003630.1"/>
</dbReference>
<dbReference type="RefSeq" id="NP_619741.1">
    <property type="nucleotide sequence ID" value="NC_003630.1"/>
</dbReference>
<dbReference type="GeneID" id="1724827"/>
<dbReference type="GeneID" id="1724829"/>
<dbReference type="KEGG" id="vg:1724827"/>
<dbReference type="KEGG" id="vg:1724829"/>
<dbReference type="Proteomes" id="UP000000476">
    <property type="component" value="Segment"/>
</dbReference>
<dbReference type="GO" id="GO:0005524">
    <property type="term" value="F:ATP binding"/>
    <property type="evidence" value="ECO:0007669"/>
    <property type="project" value="UniProtKB-KW"/>
</dbReference>
<dbReference type="GO" id="GO:0016887">
    <property type="term" value="F:ATP hydrolysis activity"/>
    <property type="evidence" value="ECO:0007669"/>
    <property type="project" value="RHEA"/>
</dbReference>
<dbReference type="GO" id="GO:0008174">
    <property type="term" value="F:mRNA methyltransferase activity"/>
    <property type="evidence" value="ECO:0007669"/>
    <property type="project" value="InterPro"/>
</dbReference>
<dbReference type="GO" id="GO:0003723">
    <property type="term" value="F:RNA binding"/>
    <property type="evidence" value="ECO:0007669"/>
    <property type="project" value="InterPro"/>
</dbReference>
<dbReference type="GO" id="GO:0003724">
    <property type="term" value="F:RNA helicase activity"/>
    <property type="evidence" value="ECO:0007669"/>
    <property type="project" value="UniProtKB-EC"/>
</dbReference>
<dbReference type="GO" id="GO:0003968">
    <property type="term" value="F:RNA-directed RNA polymerase activity"/>
    <property type="evidence" value="ECO:0007669"/>
    <property type="project" value="UniProtKB-KW"/>
</dbReference>
<dbReference type="GO" id="GO:0006351">
    <property type="term" value="P:DNA-templated transcription"/>
    <property type="evidence" value="ECO:0007669"/>
    <property type="project" value="InterPro"/>
</dbReference>
<dbReference type="GO" id="GO:0016556">
    <property type="term" value="P:mRNA modification"/>
    <property type="evidence" value="ECO:0007669"/>
    <property type="project" value="InterPro"/>
</dbReference>
<dbReference type="GO" id="GO:0006396">
    <property type="term" value="P:RNA processing"/>
    <property type="evidence" value="ECO:0007669"/>
    <property type="project" value="InterPro"/>
</dbReference>
<dbReference type="GO" id="GO:0052170">
    <property type="term" value="P:symbiont-mediated suppression of host innate immune response"/>
    <property type="evidence" value="ECO:0007669"/>
    <property type="project" value="UniProtKB-KW"/>
</dbReference>
<dbReference type="GO" id="GO:0039694">
    <property type="term" value="P:viral RNA genome replication"/>
    <property type="evidence" value="ECO:0007669"/>
    <property type="project" value="InterPro"/>
</dbReference>
<dbReference type="CDD" id="cd23251">
    <property type="entry name" value="Virgaviridae_RdRp"/>
    <property type="match status" value="1"/>
</dbReference>
<dbReference type="Gene3D" id="3.30.450.420">
    <property type="match status" value="1"/>
</dbReference>
<dbReference type="Gene3D" id="3.40.50.300">
    <property type="entry name" value="P-loop containing nucleotide triphosphate hydrolases"/>
    <property type="match status" value="2"/>
</dbReference>
<dbReference type="InterPro" id="IPR027351">
    <property type="entry name" value="(+)RNA_virus_helicase_core_dom"/>
</dbReference>
<dbReference type="InterPro" id="IPR002588">
    <property type="entry name" value="Alphavirus-like_MT_dom"/>
</dbReference>
<dbReference type="InterPro" id="IPR043502">
    <property type="entry name" value="DNA/RNA_pol_sf"/>
</dbReference>
<dbReference type="InterPro" id="IPR027417">
    <property type="entry name" value="P-loop_NTPase"/>
</dbReference>
<dbReference type="InterPro" id="IPR001788">
    <property type="entry name" value="RNA-dep_RNA_pol_alsuvir"/>
</dbReference>
<dbReference type="InterPro" id="IPR007094">
    <property type="entry name" value="RNA-dir_pol_PSvirus"/>
</dbReference>
<dbReference type="InterPro" id="IPR049329">
    <property type="entry name" value="ToMV_Hel_N"/>
</dbReference>
<dbReference type="InterPro" id="IPR047310">
    <property type="entry name" value="Virgaviridae_RdRp"/>
</dbReference>
<dbReference type="Pfam" id="PF00978">
    <property type="entry name" value="RdRP_2"/>
    <property type="match status" value="1"/>
</dbReference>
<dbReference type="Pfam" id="PF20896">
    <property type="entry name" value="ToMV_Hel_N"/>
    <property type="match status" value="1"/>
</dbReference>
<dbReference type="Pfam" id="PF01443">
    <property type="entry name" value="Viral_helicase1"/>
    <property type="match status" value="1"/>
</dbReference>
<dbReference type="Pfam" id="PF01660">
    <property type="entry name" value="Vmethyltransf"/>
    <property type="match status" value="1"/>
</dbReference>
<dbReference type="SUPFAM" id="SSF56672">
    <property type="entry name" value="DNA/RNA polymerases"/>
    <property type="match status" value="1"/>
</dbReference>
<dbReference type="SUPFAM" id="SSF52540">
    <property type="entry name" value="P-loop containing nucleoside triphosphate hydrolases"/>
    <property type="match status" value="1"/>
</dbReference>
<dbReference type="PROSITE" id="PS51743">
    <property type="entry name" value="ALPHAVIRUS_MT"/>
    <property type="match status" value="1"/>
</dbReference>
<dbReference type="PROSITE" id="PS51657">
    <property type="entry name" value="PSRV_HELICASE"/>
    <property type="match status" value="1"/>
</dbReference>
<dbReference type="PROSITE" id="PS50507">
    <property type="entry name" value="RDRP_SSRNA_POS"/>
    <property type="match status" value="1"/>
</dbReference>
<organismHost>
    <name type="scientific">Capsicum annuum</name>
    <name type="common">Capsicum pepper</name>
    <dbReference type="NCBI Taxonomy" id="4072"/>
</organismHost>
<name>RDRP_PMMVS</name>